<accession>Q88HA3</accession>
<reference key="1">
    <citation type="journal article" date="2002" name="Environ. Microbiol.">
        <title>Complete genome sequence and comparative analysis of the metabolically versatile Pseudomonas putida KT2440.</title>
        <authorList>
            <person name="Nelson K.E."/>
            <person name="Weinel C."/>
            <person name="Paulsen I.T."/>
            <person name="Dodson R.J."/>
            <person name="Hilbert H."/>
            <person name="Martins dos Santos V.A.P."/>
            <person name="Fouts D.E."/>
            <person name="Gill S.R."/>
            <person name="Pop M."/>
            <person name="Holmes M."/>
            <person name="Brinkac L.M."/>
            <person name="Beanan M.J."/>
            <person name="DeBoy R.T."/>
            <person name="Daugherty S.C."/>
            <person name="Kolonay J.F."/>
            <person name="Madupu R."/>
            <person name="Nelson W.C."/>
            <person name="White O."/>
            <person name="Peterson J.D."/>
            <person name="Khouri H.M."/>
            <person name="Hance I."/>
            <person name="Chris Lee P."/>
            <person name="Holtzapple E.K."/>
            <person name="Scanlan D."/>
            <person name="Tran K."/>
            <person name="Moazzez A."/>
            <person name="Utterback T.R."/>
            <person name="Rizzo M."/>
            <person name="Lee K."/>
            <person name="Kosack D."/>
            <person name="Moestl D."/>
            <person name="Wedler H."/>
            <person name="Lauber J."/>
            <person name="Stjepandic D."/>
            <person name="Hoheisel J."/>
            <person name="Straetz M."/>
            <person name="Heim S."/>
            <person name="Kiewitz C."/>
            <person name="Eisen J.A."/>
            <person name="Timmis K.N."/>
            <person name="Duesterhoeft A."/>
            <person name="Tuemmler B."/>
            <person name="Fraser C.M."/>
        </authorList>
    </citation>
    <scope>NUCLEOTIDE SEQUENCE [LARGE SCALE GENOMIC DNA]</scope>
    <source>
        <strain>ATCC 47054 / DSM 6125 / CFBP 8728 / NCIMB 11950 / KT2440</strain>
    </source>
</reference>
<comment type="function">
    <text evidence="1">Transfers a GMP moiety from GTP to Mo-molybdopterin (Mo-MPT) cofactor (Moco or molybdenum cofactor) to form Mo-molybdopterin guanine dinucleotide (Mo-MGD) cofactor.</text>
</comment>
<comment type="catalytic activity">
    <reaction evidence="1">
        <text>Mo-molybdopterin + GTP + H(+) = Mo-molybdopterin guanine dinucleotide + diphosphate</text>
        <dbReference type="Rhea" id="RHEA:34243"/>
        <dbReference type="ChEBI" id="CHEBI:15378"/>
        <dbReference type="ChEBI" id="CHEBI:33019"/>
        <dbReference type="ChEBI" id="CHEBI:37565"/>
        <dbReference type="ChEBI" id="CHEBI:71302"/>
        <dbReference type="ChEBI" id="CHEBI:71310"/>
        <dbReference type="EC" id="2.7.7.77"/>
    </reaction>
</comment>
<comment type="cofactor">
    <cofactor evidence="1">
        <name>Mg(2+)</name>
        <dbReference type="ChEBI" id="CHEBI:18420"/>
    </cofactor>
</comment>
<comment type="subunit">
    <text evidence="1">Monomer.</text>
</comment>
<comment type="subcellular location">
    <subcellularLocation>
        <location evidence="1">Cytoplasm</location>
    </subcellularLocation>
</comment>
<comment type="domain">
    <text evidence="1">The N-terminal domain determines nucleotide recognition and specific binding, while the C-terminal domain determines the specific binding to the target protein.</text>
</comment>
<comment type="similarity">
    <text evidence="1">Belongs to the MobA family.</text>
</comment>
<protein>
    <recommendedName>
        <fullName evidence="1">Molybdenum cofactor guanylyltransferase</fullName>
        <shortName evidence="1">MoCo guanylyltransferase</shortName>
        <ecNumber evidence="1">2.7.7.77</ecNumber>
    </recommendedName>
    <alternativeName>
        <fullName evidence="1">GTP:molybdopterin guanylyltransferase</fullName>
    </alternativeName>
    <alternativeName>
        <fullName evidence="1">Mo-MPT guanylyltransferase</fullName>
    </alternativeName>
    <alternativeName>
        <fullName evidence="1">Molybdopterin guanylyltransferase</fullName>
    </alternativeName>
    <alternativeName>
        <fullName evidence="1">Molybdopterin-guanine dinucleotide synthase</fullName>
        <shortName evidence="1">MGD synthase</shortName>
    </alternativeName>
</protein>
<gene>
    <name evidence="1" type="primary">mobA</name>
    <name type="ordered locus">PP_3457</name>
</gene>
<proteinExistence type="inferred from homology"/>
<name>MOBA_PSEPK</name>
<dbReference type="EC" id="2.7.7.77" evidence="1"/>
<dbReference type="EMBL" id="AE015451">
    <property type="protein sequence ID" value="AAN69059.1"/>
    <property type="molecule type" value="Genomic_DNA"/>
</dbReference>
<dbReference type="RefSeq" id="NP_745595.1">
    <property type="nucleotide sequence ID" value="NC_002947.4"/>
</dbReference>
<dbReference type="RefSeq" id="WP_010954323.1">
    <property type="nucleotide sequence ID" value="NZ_CP169744.1"/>
</dbReference>
<dbReference type="SMR" id="Q88HA3"/>
<dbReference type="STRING" id="160488.PP_3457"/>
<dbReference type="PaxDb" id="160488-PP_3457"/>
<dbReference type="GeneID" id="83679837"/>
<dbReference type="KEGG" id="ppu:PP_3457"/>
<dbReference type="PATRIC" id="fig|160488.4.peg.3674"/>
<dbReference type="eggNOG" id="COG0746">
    <property type="taxonomic scope" value="Bacteria"/>
</dbReference>
<dbReference type="HOGENOM" id="CLU_055597_5_1_6"/>
<dbReference type="OrthoDB" id="9788394at2"/>
<dbReference type="PhylomeDB" id="Q88HA3"/>
<dbReference type="BioCyc" id="PPUT160488:G1G01-3691-MONOMER"/>
<dbReference type="Proteomes" id="UP000000556">
    <property type="component" value="Chromosome"/>
</dbReference>
<dbReference type="GO" id="GO:0005737">
    <property type="term" value="C:cytoplasm"/>
    <property type="evidence" value="ECO:0007669"/>
    <property type="project" value="UniProtKB-SubCell"/>
</dbReference>
<dbReference type="GO" id="GO:0005525">
    <property type="term" value="F:GTP binding"/>
    <property type="evidence" value="ECO:0007669"/>
    <property type="project" value="UniProtKB-UniRule"/>
</dbReference>
<dbReference type="GO" id="GO:0046872">
    <property type="term" value="F:metal ion binding"/>
    <property type="evidence" value="ECO:0007669"/>
    <property type="project" value="UniProtKB-KW"/>
</dbReference>
<dbReference type="GO" id="GO:0061603">
    <property type="term" value="F:molybdenum cofactor guanylyltransferase activity"/>
    <property type="evidence" value="ECO:0007669"/>
    <property type="project" value="UniProtKB-EC"/>
</dbReference>
<dbReference type="GO" id="GO:1902758">
    <property type="term" value="P:bis(molybdopterin guanine dinucleotide)molybdenum biosynthetic process"/>
    <property type="evidence" value="ECO:0007669"/>
    <property type="project" value="TreeGrafter"/>
</dbReference>
<dbReference type="CDD" id="cd02503">
    <property type="entry name" value="MobA"/>
    <property type="match status" value="1"/>
</dbReference>
<dbReference type="Gene3D" id="3.90.550.10">
    <property type="entry name" value="Spore Coat Polysaccharide Biosynthesis Protein SpsA, Chain A"/>
    <property type="match status" value="1"/>
</dbReference>
<dbReference type="HAMAP" id="MF_00316">
    <property type="entry name" value="MobA"/>
    <property type="match status" value="1"/>
</dbReference>
<dbReference type="InterPro" id="IPR025877">
    <property type="entry name" value="MobA-like_NTP_Trfase"/>
</dbReference>
<dbReference type="InterPro" id="IPR013482">
    <property type="entry name" value="Molybde_CF_guanTrfase"/>
</dbReference>
<dbReference type="InterPro" id="IPR029044">
    <property type="entry name" value="Nucleotide-diphossugar_trans"/>
</dbReference>
<dbReference type="NCBIfam" id="TIGR02665">
    <property type="entry name" value="molyb_mobA"/>
    <property type="match status" value="1"/>
</dbReference>
<dbReference type="PANTHER" id="PTHR19136">
    <property type="entry name" value="MOLYBDENUM COFACTOR GUANYLYLTRANSFERASE"/>
    <property type="match status" value="1"/>
</dbReference>
<dbReference type="PANTHER" id="PTHR19136:SF81">
    <property type="entry name" value="MOLYBDENUM COFACTOR GUANYLYLTRANSFERASE"/>
    <property type="match status" value="1"/>
</dbReference>
<dbReference type="Pfam" id="PF12804">
    <property type="entry name" value="NTP_transf_3"/>
    <property type="match status" value="1"/>
</dbReference>
<dbReference type="SUPFAM" id="SSF53448">
    <property type="entry name" value="Nucleotide-diphospho-sugar transferases"/>
    <property type="match status" value="1"/>
</dbReference>
<organism>
    <name type="scientific">Pseudomonas putida (strain ATCC 47054 / DSM 6125 / CFBP 8728 / NCIMB 11950 / KT2440)</name>
    <dbReference type="NCBI Taxonomy" id="160488"/>
    <lineage>
        <taxon>Bacteria</taxon>
        <taxon>Pseudomonadati</taxon>
        <taxon>Pseudomonadota</taxon>
        <taxon>Gammaproteobacteria</taxon>
        <taxon>Pseudomonadales</taxon>
        <taxon>Pseudomonadaceae</taxon>
        <taxon>Pseudomonas</taxon>
    </lineage>
</organism>
<evidence type="ECO:0000255" key="1">
    <source>
        <dbReference type="HAMAP-Rule" id="MF_00316"/>
    </source>
</evidence>
<feature type="chain" id="PRO_0000134901" description="Molybdenum cofactor guanylyltransferase">
    <location>
        <begin position="1"/>
        <end position="191"/>
    </location>
</feature>
<feature type="binding site" evidence="1">
    <location>
        <begin position="13"/>
        <end position="15"/>
    </location>
    <ligand>
        <name>GTP</name>
        <dbReference type="ChEBI" id="CHEBI:37565"/>
    </ligand>
</feature>
<feature type="binding site" evidence="1">
    <location>
        <position position="26"/>
    </location>
    <ligand>
        <name>GTP</name>
        <dbReference type="ChEBI" id="CHEBI:37565"/>
    </ligand>
</feature>
<feature type="binding site" evidence="1">
    <location>
        <position position="72"/>
    </location>
    <ligand>
        <name>GTP</name>
        <dbReference type="ChEBI" id="CHEBI:37565"/>
    </ligand>
</feature>
<feature type="binding site" evidence="1">
    <location>
        <position position="102"/>
    </location>
    <ligand>
        <name>GTP</name>
        <dbReference type="ChEBI" id="CHEBI:37565"/>
    </ligand>
</feature>
<feature type="binding site" evidence="1">
    <location>
        <position position="102"/>
    </location>
    <ligand>
        <name>Mg(2+)</name>
        <dbReference type="ChEBI" id="CHEBI:18420"/>
    </ligand>
</feature>
<sequence>MPDALPPCSILILAGGRGQRMGGRDKGLVDWQGEPLIAHVHRAVRPLSDDLVISCNRNQAAYQAYADRLVGDAEADFPGPLAGVIAGLRVARHAWVVVLACDAPLVDRELIEGLLRLAVAGNSAAMVRQGGFWQPMFSVLPKRVLPVLEQAWAAGERSLQKALLREAVQGLECAESDRRLSNFNSPERLQD</sequence>
<keyword id="KW-0963">Cytoplasm</keyword>
<keyword id="KW-0342">GTP-binding</keyword>
<keyword id="KW-0460">Magnesium</keyword>
<keyword id="KW-0479">Metal-binding</keyword>
<keyword id="KW-0501">Molybdenum cofactor biosynthesis</keyword>
<keyword id="KW-0547">Nucleotide-binding</keyword>
<keyword id="KW-1185">Reference proteome</keyword>
<keyword id="KW-0808">Transferase</keyword>